<protein>
    <recommendedName>
        <fullName>cAMP-dependent protein kinase regulatory subunit</fullName>
        <shortName>PKA regulatory subunit</shortName>
    </recommendedName>
</protein>
<sequence length="390" mass="42271">MSASGFTSPFGANSNPFGSPEERRGVAGSIQPVLEEEEADGIGSEPISFKSPGFRAPFGGGDANSEGPPSSRPQNPDGYPAQYNFARRTSVSAESLKPIADSYDNWTPPFHPKSAEQLDRLKKAIQGNFLFSHLDDEQSAQILGALVEKPIPAKDIKVIVQGDAGDYFYVVEKGKFSVHVNSSGVMQAGTQGLGDHVGTIEAGGSFGELALMYNAPRAATVMSAEPNCVLWALDRVTFRRILMESTFSRRRMYENFLEEVPILSTLTAYERSKIADALETQKYPPGTVVIKEGDPGEDFYLLECGEAEAFKAGIDQPVKLYKKGDFFGELALLNDAPRAASVVSKTEVKVAALGKSAFQRLLGPVEPIMRRTRYDAIKTGVEEMDPLQAA</sequence>
<comment type="subunit">
    <text evidence="1">Tetramer, composed of 2 regulatory (R) and 2 catalytic (C) subunits. In the presence of cAMP it dissociates into 2 active monomeric C subunits and an R dimer (By similarity).</text>
</comment>
<comment type="similarity">
    <text evidence="5">Belongs to the cAMP-dependent kinase regulatory chain family.</text>
</comment>
<gene>
    <name type="primary">SUM1</name>
    <name type="synonym">RPKA</name>
    <name type="ORF">MGG_07335</name>
</gene>
<dbReference type="EMBL" id="AF024633">
    <property type="protein sequence ID" value="AAC34140.1"/>
    <property type="molecule type" value="Genomic_DNA"/>
</dbReference>
<dbReference type="EMBL" id="AF015753">
    <property type="protein sequence ID" value="AAB70215.1"/>
    <property type="molecule type" value="Genomic_DNA"/>
</dbReference>
<dbReference type="EMBL" id="CM001232">
    <property type="protein sequence ID" value="EHA55765.1"/>
    <property type="molecule type" value="Genomic_DNA"/>
</dbReference>
<dbReference type="RefSeq" id="XP_003715572.1">
    <property type="nucleotide sequence ID" value="XM_003715524.1"/>
</dbReference>
<dbReference type="SMR" id="O14448"/>
<dbReference type="FunCoup" id="O14448">
    <property type="interactions" value="411"/>
</dbReference>
<dbReference type="STRING" id="242507.O14448"/>
<dbReference type="EnsemblFungi" id="MGG_07335T0">
    <property type="protein sequence ID" value="MGG_07335T0"/>
    <property type="gene ID" value="MGG_07335"/>
</dbReference>
<dbReference type="GeneID" id="2683231"/>
<dbReference type="KEGG" id="mgr:MGG_07335"/>
<dbReference type="VEuPathDB" id="FungiDB:MGG_07335"/>
<dbReference type="eggNOG" id="KOG1113">
    <property type="taxonomic scope" value="Eukaryota"/>
</dbReference>
<dbReference type="HOGENOM" id="CLU_018310_0_0_1"/>
<dbReference type="InParanoid" id="O14448"/>
<dbReference type="OMA" id="WSPPHHP"/>
<dbReference type="OrthoDB" id="417078at2759"/>
<dbReference type="PHI-base" id="PHI:128"/>
<dbReference type="PHI-base" id="PHI:6818"/>
<dbReference type="Proteomes" id="UP000009058">
    <property type="component" value="Chromosome 2"/>
</dbReference>
<dbReference type="GO" id="GO:0005952">
    <property type="term" value="C:cAMP-dependent protein kinase complex"/>
    <property type="evidence" value="ECO:0007669"/>
    <property type="project" value="InterPro"/>
</dbReference>
<dbReference type="GO" id="GO:0005829">
    <property type="term" value="C:cytosol"/>
    <property type="evidence" value="ECO:0007669"/>
    <property type="project" value="TreeGrafter"/>
</dbReference>
<dbReference type="GO" id="GO:0005634">
    <property type="term" value="C:nucleus"/>
    <property type="evidence" value="ECO:0007669"/>
    <property type="project" value="TreeGrafter"/>
</dbReference>
<dbReference type="GO" id="GO:0030552">
    <property type="term" value="F:cAMP binding"/>
    <property type="evidence" value="ECO:0007669"/>
    <property type="project" value="UniProtKB-KW"/>
</dbReference>
<dbReference type="GO" id="GO:0004862">
    <property type="term" value="F:cAMP-dependent protein kinase inhibitor activity"/>
    <property type="evidence" value="ECO:0007669"/>
    <property type="project" value="TreeGrafter"/>
</dbReference>
<dbReference type="GO" id="GO:0034236">
    <property type="term" value="F:protein kinase A catalytic subunit binding"/>
    <property type="evidence" value="ECO:0007669"/>
    <property type="project" value="TreeGrafter"/>
</dbReference>
<dbReference type="CDD" id="cd00038">
    <property type="entry name" value="CAP_ED"/>
    <property type="match status" value="2"/>
</dbReference>
<dbReference type="FunFam" id="2.60.120.10:FF:000039">
    <property type="entry name" value="cAMP-dependent protein kinase regulatory subunit"/>
    <property type="match status" value="1"/>
</dbReference>
<dbReference type="FunFam" id="2.60.120.10:FF:000006">
    <property type="entry name" value="cAMP-dependent protein kinase type I-alpha regulatory subunit"/>
    <property type="match status" value="1"/>
</dbReference>
<dbReference type="Gene3D" id="2.60.120.10">
    <property type="entry name" value="Jelly Rolls"/>
    <property type="match status" value="2"/>
</dbReference>
<dbReference type="InterPro" id="IPR050503">
    <property type="entry name" value="cAMP-dep_PK_reg_su-like"/>
</dbReference>
<dbReference type="InterPro" id="IPR012198">
    <property type="entry name" value="cAMP_dep_PK_reg_su"/>
</dbReference>
<dbReference type="InterPro" id="IPR018488">
    <property type="entry name" value="cNMP-bd_CS"/>
</dbReference>
<dbReference type="InterPro" id="IPR000595">
    <property type="entry name" value="cNMP-bd_dom"/>
</dbReference>
<dbReference type="InterPro" id="IPR018490">
    <property type="entry name" value="cNMP-bd_dom_sf"/>
</dbReference>
<dbReference type="InterPro" id="IPR014710">
    <property type="entry name" value="RmlC-like_jellyroll"/>
</dbReference>
<dbReference type="PANTHER" id="PTHR11635">
    <property type="entry name" value="CAMP-DEPENDENT PROTEIN KINASE REGULATORY CHAIN"/>
    <property type="match status" value="1"/>
</dbReference>
<dbReference type="PANTHER" id="PTHR11635:SF152">
    <property type="entry name" value="CAMP-DEPENDENT PROTEIN KINASE TYPE I REGULATORY SUBUNIT-RELATED"/>
    <property type="match status" value="1"/>
</dbReference>
<dbReference type="Pfam" id="PF00027">
    <property type="entry name" value="cNMP_binding"/>
    <property type="match status" value="2"/>
</dbReference>
<dbReference type="PIRSF" id="PIRSF000548">
    <property type="entry name" value="PK_regulatory"/>
    <property type="match status" value="1"/>
</dbReference>
<dbReference type="PRINTS" id="PR00103">
    <property type="entry name" value="CAMPKINASE"/>
</dbReference>
<dbReference type="SMART" id="SM00100">
    <property type="entry name" value="cNMP"/>
    <property type="match status" value="2"/>
</dbReference>
<dbReference type="SUPFAM" id="SSF51206">
    <property type="entry name" value="cAMP-binding domain-like"/>
    <property type="match status" value="2"/>
</dbReference>
<dbReference type="PROSITE" id="PS00888">
    <property type="entry name" value="CNMP_BINDING_1"/>
    <property type="match status" value="2"/>
</dbReference>
<dbReference type="PROSITE" id="PS00889">
    <property type="entry name" value="CNMP_BINDING_2"/>
    <property type="match status" value="2"/>
</dbReference>
<dbReference type="PROSITE" id="PS50042">
    <property type="entry name" value="CNMP_BINDING_3"/>
    <property type="match status" value="2"/>
</dbReference>
<keyword id="KW-0114">cAMP</keyword>
<keyword id="KW-0116">cAMP-binding</keyword>
<keyword id="KW-0547">Nucleotide-binding</keyword>
<keyword id="KW-0597">Phosphoprotein</keyword>
<keyword id="KW-1185">Reference proteome</keyword>
<keyword id="KW-0677">Repeat</keyword>
<evidence type="ECO:0000250" key="1"/>
<evidence type="ECO:0000255" key="2"/>
<evidence type="ECO:0000256" key="3">
    <source>
        <dbReference type="SAM" id="MobiDB-lite"/>
    </source>
</evidence>
<evidence type="ECO:0000269" key="4">
    <source>
    </source>
</evidence>
<evidence type="ECO:0000305" key="5"/>
<feature type="chain" id="PRO_0000205411" description="cAMP-dependent protein kinase regulatory subunit">
    <location>
        <begin position="1"/>
        <end position="390"/>
    </location>
</feature>
<feature type="region of interest" description="Dimerization and phosphorylation" evidence="2">
    <location>
        <begin position="1"/>
        <end position="129"/>
    </location>
</feature>
<feature type="region of interest" description="Disordered" evidence="3">
    <location>
        <begin position="1"/>
        <end position="81"/>
    </location>
</feature>
<feature type="compositionally biased region" description="Polar residues" evidence="3">
    <location>
        <begin position="1"/>
        <end position="17"/>
    </location>
</feature>
<feature type="binding site">
    <location>
        <begin position="130"/>
        <end position="261"/>
    </location>
    <ligand>
        <name>3',5'-cyclic AMP</name>
        <dbReference type="ChEBI" id="CHEBI:58165"/>
        <label>1</label>
    </ligand>
</feature>
<feature type="binding site" evidence="1">
    <location>
        <position position="208"/>
    </location>
    <ligand>
        <name>3',5'-cyclic AMP</name>
        <dbReference type="ChEBI" id="CHEBI:58165"/>
        <label>1</label>
    </ligand>
</feature>
<feature type="binding site" evidence="1">
    <location>
        <position position="217"/>
    </location>
    <ligand>
        <name>3',5'-cyclic AMP</name>
        <dbReference type="ChEBI" id="CHEBI:58165"/>
        <label>1</label>
    </ligand>
</feature>
<feature type="binding site">
    <location>
        <begin position="262"/>
        <end position="383"/>
    </location>
    <ligand>
        <name>3',5'-cyclic AMP</name>
        <dbReference type="ChEBI" id="CHEBI:58165"/>
        <label>2</label>
    </ligand>
</feature>
<feature type="binding site" evidence="1">
    <location>
        <position position="329"/>
    </location>
    <ligand>
        <name>3',5'-cyclic AMP</name>
        <dbReference type="ChEBI" id="CHEBI:58165"/>
        <label>2</label>
    </ligand>
</feature>
<feature type="binding site" evidence="1">
    <location>
        <position position="338"/>
    </location>
    <ligand>
        <name>3',5'-cyclic AMP</name>
        <dbReference type="ChEBI" id="CHEBI:58165"/>
        <label>2</label>
    </ligand>
</feature>
<feature type="modified residue" description="Phosphoserine" evidence="1">
    <location>
        <position position="90"/>
    </location>
</feature>
<feature type="mutagenesis site" description="In SUM1-99; restores cAMP-stimulated appressorium formation and growth morphogenesis to adenylate cyclase-deficient mutants." evidence="4">
    <original>L</original>
    <variation>R</variation>
    <location>
        <position position="211"/>
    </location>
</feature>
<organism>
    <name type="scientific">Pyricularia oryzae (strain 70-15 / ATCC MYA-4617 / FGSC 8958)</name>
    <name type="common">Rice blast fungus</name>
    <name type="synonym">Magnaporthe oryzae</name>
    <dbReference type="NCBI Taxonomy" id="242507"/>
    <lineage>
        <taxon>Eukaryota</taxon>
        <taxon>Fungi</taxon>
        <taxon>Dikarya</taxon>
        <taxon>Ascomycota</taxon>
        <taxon>Pezizomycotina</taxon>
        <taxon>Sordariomycetes</taxon>
        <taxon>Sordariomycetidae</taxon>
        <taxon>Magnaporthales</taxon>
        <taxon>Pyriculariaceae</taxon>
        <taxon>Pyricularia</taxon>
    </lineage>
</organism>
<name>KAPR_PYRO7</name>
<reference key="1">
    <citation type="journal article" date="1998" name="Plant Cell">
        <title>Divergent cAMP signaling pathways regulate growth and pathogenesis in the rice blast fungus Magnaporthe grisea.</title>
        <authorList>
            <person name="Adachi K."/>
            <person name="Hamer J.E."/>
        </authorList>
    </citation>
    <scope>NUCLEOTIDE SEQUENCE [GENOMIC DNA]</scope>
    <scope>MUTAGENESIS OF LEU-211</scope>
    <source>
        <strain>Guyane 11</strain>
    </source>
</reference>
<reference key="2">
    <citation type="submission" date="1997-09" db="EMBL/GenBank/DDBJ databases">
        <title>The cAMP-dependent protein kinase regulatory subunit gene from Magnaporthe grisea.</title>
        <authorList>
            <person name="Gilbert R.D."/>
            <person name="Dean R.A."/>
        </authorList>
    </citation>
    <scope>NUCLEOTIDE SEQUENCE [GENOMIC DNA]</scope>
    <source>
        <strain>70-15 / ATCC MYA-4617 / FGSC 8958</strain>
    </source>
</reference>
<reference key="3">
    <citation type="journal article" date="2005" name="Nature">
        <title>The genome sequence of the rice blast fungus Magnaporthe grisea.</title>
        <authorList>
            <person name="Dean R.A."/>
            <person name="Talbot N.J."/>
            <person name="Ebbole D.J."/>
            <person name="Farman M.L."/>
            <person name="Mitchell T.K."/>
            <person name="Orbach M.J."/>
            <person name="Thon M.R."/>
            <person name="Kulkarni R."/>
            <person name="Xu J.-R."/>
            <person name="Pan H."/>
            <person name="Read N.D."/>
            <person name="Lee Y.-H."/>
            <person name="Carbone I."/>
            <person name="Brown D."/>
            <person name="Oh Y.Y."/>
            <person name="Donofrio N."/>
            <person name="Jeong J.S."/>
            <person name="Soanes D.M."/>
            <person name="Djonovic S."/>
            <person name="Kolomiets E."/>
            <person name="Rehmeyer C."/>
            <person name="Li W."/>
            <person name="Harding M."/>
            <person name="Kim S."/>
            <person name="Lebrun M.-H."/>
            <person name="Bohnert H."/>
            <person name="Coughlan S."/>
            <person name="Butler J."/>
            <person name="Calvo S.E."/>
            <person name="Ma L.-J."/>
            <person name="Nicol R."/>
            <person name="Purcell S."/>
            <person name="Nusbaum C."/>
            <person name="Galagan J.E."/>
            <person name="Birren B.W."/>
        </authorList>
    </citation>
    <scope>NUCLEOTIDE SEQUENCE [LARGE SCALE GENOMIC DNA]</scope>
    <source>
        <strain>70-15 / ATCC MYA-4617 / FGSC 8958</strain>
    </source>
</reference>
<accession>O14448</accession>
<accession>A4RIF5</accession>
<accession>G4MVD9</accession>
<proteinExistence type="evidence at protein level"/>